<dbReference type="EMBL" id="AK019677">
    <property type="protein sequence ID" value="BAB31833.1"/>
    <property type="molecule type" value="mRNA"/>
</dbReference>
<dbReference type="EMBL" id="AK154605">
    <property type="protein sequence ID" value="BAE32707.1"/>
    <property type="molecule type" value="mRNA"/>
</dbReference>
<dbReference type="EMBL" id="AK155571">
    <property type="protein sequence ID" value="BAE33329.1"/>
    <property type="molecule type" value="mRNA"/>
</dbReference>
<dbReference type="EMBL" id="AK162246">
    <property type="protein sequence ID" value="BAE36813.1"/>
    <property type="molecule type" value="mRNA"/>
</dbReference>
<dbReference type="EMBL" id="AK170498">
    <property type="protein sequence ID" value="BAE41837.1"/>
    <property type="molecule type" value="mRNA"/>
</dbReference>
<dbReference type="EMBL" id="BC119594">
    <property type="protein sequence ID" value="AAI19595.1"/>
    <property type="molecule type" value="mRNA"/>
</dbReference>
<dbReference type="EMBL" id="BC119595">
    <property type="protein sequence ID" value="AAI19596.1"/>
    <property type="molecule type" value="mRNA"/>
</dbReference>
<dbReference type="CCDS" id="CCDS28366.1">
    <molecule id="Q3U213-2"/>
</dbReference>
<dbReference type="CCDS" id="CCDS49933.1">
    <molecule id="Q3U213-1"/>
</dbReference>
<dbReference type="RefSeq" id="NP_001104487.1">
    <molecule id="Q3U213-1"/>
    <property type="nucleotide sequence ID" value="NM_001111017.1"/>
</dbReference>
<dbReference type="RefSeq" id="NP_796285.2">
    <molecule id="Q3U213-2"/>
    <property type="nucleotide sequence ID" value="NM_177311.4"/>
</dbReference>
<dbReference type="BioGRID" id="236459">
    <property type="interactions" value="3"/>
</dbReference>
<dbReference type="FunCoup" id="Q3U213">
    <property type="interactions" value="1846"/>
</dbReference>
<dbReference type="STRING" id="10090.ENSMUSP00000095043"/>
<dbReference type="ESTHER" id="mouse-srac1">
    <property type="family name" value="SERAC1"/>
</dbReference>
<dbReference type="iPTMnet" id="Q3U213"/>
<dbReference type="PhosphoSitePlus" id="Q3U213"/>
<dbReference type="SwissPalm" id="Q3U213"/>
<dbReference type="PaxDb" id="10090-ENSMUSP00000095043"/>
<dbReference type="PeptideAtlas" id="Q3U213"/>
<dbReference type="ProteomicsDB" id="257393">
    <molecule id="Q3U213-1"/>
</dbReference>
<dbReference type="ProteomicsDB" id="257394">
    <molecule id="Q3U213-2"/>
</dbReference>
<dbReference type="ProteomicsDB" id="257395">
    <molecule id="Q3U213-3"/>
</dbReference>
<dbReference type="Pumba" id="Q3U213"/>
<dbReference type="Antibodypedia" id="20005">
    <property type="antibodies" value="96 antibodies from 21 providers"/>
</dbReference>
<dbReference type="DNASU" id="321007"/>
<dbReference type="Ensembl" id="ENSMUST00000024570.6">
    <molecule id="Q3U213-2"/>
    <property type="protein sequence ID" value="ENSMUSP00000024570.6"/>
    <property type="gene ID" value="ENSMUSG00000015659.13"/>
</dbReference>
<dbReference type="Ensembl" id="ENSMUST00000097432.10">
    <molecule id="Q3U213-1"/>
    <property type="protein sequence ID" value="ENSMUSP00000095043.4"/>
    <property type="gene ID" value="ENSMUSG00000015659.13"/>
</dbReference>
<dbReference type="GeneID" id="321007"/>
<dbReference type="KEGG" id="mmu:321007"/>
<dbReference type="UCSC" id="uc008afy.2">
    <molecule id="Q3U213-2"/>
    <property type="organism name" value="mouse"/>
</dbReference>
<dbReference type="UCSC" id="uc008afz.2">
    <molecule id="Q3U213-1"/>
    <property type="organism name" value="mouse"/>
</dbReference>
<dbReference type="AGR" id="MGI:2447813"/>
<dbReference type="CTD" id="84947"/>
<dbReference type="MGI" id="MGI:2447813">
    <property type="gene designation" value="Serac1"/>
</dbReference>
<dbReference type="VEuPathDB" id="HostDB:ENSMUSG00000015659"/>
<dbReference type="eggNOG" id="KOG2029">
    <property type="taxonomic scope" value="Eukaryota"/>
</dbReference>
<dbReference type="GeneTree" id="ENSGT00390000003560"/>
<dbReference type="HOGENOM" id="CLU_023317_1_0_1"/>
<dbReference type="InParanoid" id="Q3U213"/>
<dbReference type="OMA" id="RRTEYIY"/>
<dbReference type="OrthoDB" id="5086500at2759"/>
<dbReference type="PhylomeDB" id="Q3U213"/>
<dbReference type="TreeFam" id="TF319689"/>
<dbReference type="BioGRID-ORCS" id="321007">
    <property type="hits" value="5 hits in 77 CRISPR screens"/>
</dbReference>
<dbReference type="ChiTaRS" id="Serac1">
    <property type="organism name" value="mouse"/>
</dbReference>
<dbReference type="PRO" id="PR:Q3U213"/>
<dbReference type="Proteomes" id="UP000000589">
    <property type="component" value="Chromosome 17"/>
</dbReference>
<dbReference type="RNAct" id="Q3U213">
    <property type="molecule type" value="protein"/>
</dbReference>
<dbReference type="Bgee" id="ENSMUSG00000015659">
    <property type="expression patterns" value="Expressed in embryonic brain and 243 other cell types or tissues"/>
</dbReference>
<dbReference type="GO" id="GO:0005789">
    <property type="term" value="C:endoplasmic reticulum membrane"/>
    <property type="evidence" value="ECO:0000314"/>
    <property type="project" value="FlyBase"/>
</dbReference>
<dbReference type="GO" id="GO:0031012">
    <property type="term" value="C:extracellular matrix"/>
    <property type="evidence" value="ECO:0000314"/>
    <property type="project" value="MGI"/>
</dbReference>
<dbReference type="GO" id="GO:0044233">
    <property type="term" value="C:mitochondria-associated endoplasmic reticulum membrane contact site"/>
    <property type="evidence" value="ECO:0007669"/>
    <property type="project" value="Ensembl"/>
</dbReference>
<dbReference type="GO" id="GO:0005741">
    <property type="term" value="C:mitochondrial outer membrane"/>
    <property type="evidence" value="ECO:0000314"/>
    <property type="project" value="FlyBase"/>
</dbReference>
<dbReference type="GO" id="GO:0030198">
    <property type="term" value="P:extracellular matrix organization"/>
    <property type="evidence" value="ECO:0000314"/>
    <property type="project" value="MGI"/>
</dbReference>
<dbReference type="GO" id="GO:0032367">
    <property type="term" value="P:intracellular cholesterol transport"/>
    <property type="evidence" value="ECO:0007669"/>
    <property type="project" value="Ensembl"/>
</dbReference>
<dbReference type="GO" id="GO:0036148">
    <property type="term" value="P:phosphatidylglycerol acyl-chain remodeling"/>
    <property type="evidence" value="ECO:0007669"/>
    <property type="project" value="Ensembl"/>
</dbReference>
<dbReference type="GO" id="GO:0008654">
    <property type="term" value="P:phospholipid biosynthetic process"/>
    <property type="evidence" value="ECO:0007669"/>
    <property type="project" value="UniProtKB-KW"/>
</dbReference>
<dbReference type="FunFam" id="3.40.50.1820:FF:000088">
    <property type="entry name" value="SERAC1 isoform 1"/>
    <property type="match status" value="1"/>
</dbReference>
<dbReference type="Gene3D" id="3.40.50.1820">
    <property type="entry name" value="alpha/beta hydrolase"/>
    <property type="match status" value="1"/>
</dbReference>
<dbReference type="Gene3D" id="1.25.10.10">
    <property type="entry name" value="Leucine-rich Repeat Variant"/>
    <property type="match status" value="1"/>
</dbReference>
<dbReference type="InterPro" id="IPR029058">
    <property type="entry name" value="AB_hydrolase_fold"/>
</dbReference>
<dbReference type="InterPro" id="IPR011989">
    <property type="entry name" value="ARM-like"/>
</dbReference>
<dbReference type="InterPro" id="IPR016024">
    <property type="entry name" value="ARM-type_fold"/>
</dbReference>
<dbReference type="InterPro" id="IPR052374">
    <property type="entry name" value="SERAC1"/>
</dbReference>
<dbReference type="PANTHER" id="PTHR48182">
    <property type="entry name" value="PROTEIN SERAC1"/>
    <property type="match status" value="1"/>
</dbReference>
<dbReference type="PANTHER" id="PTHR48182:SF2">
    <property type="entry name" value="PROTEIN SERAC1"/>
    <property type="match status" value="1"/>
</dbReference>
<dbReference type="SUPFAM" id="SSF53474">
    <property type="entry name" value="alpha/beta-Hydrolases"/>
    <property type="match status" value="1"/>
</dbReference>
<dbReference type="SUPFAM" id="SSF48371">
    <property type="entry name" value="ARM repeat"/>
    <property type="match status" value="1"/>
</dbReference>
<protein>
    <recommendedName>
        <fullName>Protein SERAC1</fullName>
    </recommendedName>
    <alternativeName>
        <fullName>Serine active site-containing protein 1</fullName>
    </alternativeName>
</protein>
<evidence type="ECO:0000250" key="1"/>
<evidence type="ECO:0000250" key="2">
    <source>
        <dbReference type="UniProtKB" id="Q96JX3"/>
    </source>
</evidence>
<evidence type="ECO:0000255" key="3"/>
<evidence type="ECO:0000269" key="4">
    <source>
    </source>
</evidence>
<evidence type="ECO:0000269" key="5">
    <source>
    </source>
</evidence>
<evidence type="ECO:0000269" key="6">
    <source>
    </source>
</evidence>
<evidence type="ECO:0000303" key="7">
    <source>
    </source>
</evidence>
<evidence type="ECO:0000305" key="8"/>
<feature type="chain" id="PRO_0000274673" description="Protein SERAC1">
    <location>
        <begin position="1"/>
        <end position="654"/>
    </location>
</feature>
<feature type="transmembrane region" description="Helical" evidence="3">
    <location>
        <begin position="32"/>
        <end position="54"/>
    </location>
</feature>
<feature type="splice variant" id="VSP_022864" description="In isoform 2." evidence="7">
    <location>
        <begin position="89"/>
        <end position="118"/>
    </location>
</feature>
<feature type="splice variant" id="VSP_022865" description="In isoform 3." evidence="7">
    <original>VS</original>
    <variation>DR</variation>
    <location>
        <begin position="341"/>
        <end position="342"/>
    </location>
</feature>
<feature type="splice variant" id="VSP_022866" description="In isoform 3." evidence="7">
    <location>
        <begin position="343"/>
        <end position="654"/>
    </location>
</feature>
<feature type="sequence variant" description="In strain: C57BL/6J." evidence="4 5">
    <original>A</original>
    <variation>V</variation>
    <location>
        <position position="4"/>
    </location>
</feature>
<feature type="sequence variant" description="In strain: C57BL/6J." evidence="4 5">
    <original>Y</original>
    <variation>F</variation>
    <location>
        <position position="6"/>
    </location>
</feature>
<feature type="sequence variant" description="In strain: C57BL/6J." evidence="4 5">
    <original>C</original>
    <variation>F</variation>
    <location>
        <position position="7"/>
    </location>
</feature>
<feature type="sequence variant" evidence="4">
    <original>T</original>
    <variation>M</variation>
    <location>
        <position position="25"/>
    </location>
</feature>
<feature type="sequence variant" description="In strain: BALB/cByJ and C57BL/6J; requires 2 nucleotide substitutions." evidence="4 5">
    <original>Q</original>
    <variation>T</variation>
    <location>
        <position position="64"/>
    </location>
</feature>
<feature type="sequence variant" evidence="4">
    <original>N</original>
    <variation>S</variation>
    <location>
        <position position="518"/>
    </location>
</feature>
<organism>
    <name type="scientific">Mus musculus</name>
    <name type="common">Mouse</name>
    <dbReference type="NCBI Taxonomy" id="10090"/>
    <lineage>
        <taxon>Eukaryota</taxon>
        <taxon>Metazoa</taxon>
        <taxon>Chordata</taxon>
        <taxon>Craniata</taxon>
        <taxon>Vertebrata</taxon>
        <taxon>Euteleostomi</taxon>
        <taxon>Mammalia</taxon>
        <taxon>Eutheria</taxon>
        <taxon>Euarchontoglires</taxon>
        <taxon>Glires</taxon>
        <taxon>Rodentia</taxon>
        <taxon>Myomorpha</taxon>
        <taxon>Muroidea</taxon>
        <taxon>Muridae</taxon>
        <taxon>Murinae</taxon>
        <taxon>Mus</taxon>
        <taxon>Mus</taxon>
    </lineage>
</organism>
<accession>Q3U213</accession>
<accession>Q3TS62</accession>
<accession>Q9D2G7</accession>
<keyword id="KW-0025">Alternative splicing</keyword>
<keyword id="KW-0256">Endoplasmic reticulum</keyword>
<keyword id="KW-0444">Lipid biosynthesis</keyword>
<keyword id="KW-0443">Lipid metabolism</keyword>
<keyword id="KW-0472">Membrane</keyword>
<keyword id="KW-0496">Mitochondrion</keyword>
<keyword id="KW-0594">Phospholipid biosynthesis</keyword>
<keyword id="KW-1208">Phospholipid metabolism</keyword>
<keyword id="KW-1185">Reference proteome</keyword>
<keyword id="KW-0812">Transmembrane</keyword>
<keyword id="KW-1133">Transmembrane helix</keyword>
<proteinExistence type="evidence at transcript level"/>
<name>SRAC1_MOUSE</name>
<gene>
    <name type="primary">Serac1</name>
    <name type="synonym">D17Ertd141e</name>
</gene>
<sequence>MSLAAYCVICCRRIGSFAPRSKSRTPWRNIRNIIRFTGSLIVGGSLFITYEVLALKKSLMLDTQVVEREKMKSYIYVHKAPVDRLDNRGIVWQARKELHRAVRKLLAAAAKVLRSPFADSFSTVDIEDHDCAVWLLLRKSREDDLAARLQAVREMSEAHHWHDYQYRIIAQACDPRTLIGLARSKESDLRFFLPPPPLPSLKEDSSTEEELRHLLASLPQTELDECLQYFTSLALSESSQSLAAQKGGLWCFGGNGLPYAESFGKVPSATVEMFCLEAIVKHSEIPSHCDHIEAGGGLQLLQRLYQLHKDCPKVQRNVMRIIGNMALNEHLHPAIVHSGWVSLMAEALKSSHIMEASHAARTLANLDRETVGEKYQDGVYVLHPQCRTSQPIKADVLFIHGLMGAAFKTWRQHDSQRALTESAVVDEDRYTTCWPKTWLAKDCPSLRIISVEYDTSLSDWRARCPMERKSIAFRSNELLSKLRAAGVGDRPMIWISHSMGGLLVKKMLLEASKKPELNALINNTRGIIFYSVPHHGSRLAEYSVNIRYLLFPSLEVKELSKDSPALKTLQDDFLEFAKDKNFQVLNFVETQPTFIGSMIKLHVVPVESADLGIGDLIPVDVNHLNICKPKTKDAFLYQRTLQFICETLARDLEN</sequence>
<comment type="function">
    <text evidence="2 6">Facilitates the transport of serine from the cytosol to the mitochondria by interacting with and stabilizing Sideroflexin-1 (SFXN1), a mitochondrial serine transporter, playing a fundamental role in the one-carbon cycle responsible for the synthesis of nucleotides needed for mitochondrial DNA replication (PubMed:35235340). Plays an important role in the phosphatidylglycerol (PG) remodeling that is essential for both mitochondrial function and intracellular cholesterol trafficking. Specifically involved in the exchange of the sn-1 acyl chain from PG 16:0/18:1(9Z) (also known as 1-hexadecanoyl-2-(9Z-octadecenoyl)-sn-glycero-3-phospho-(1'-sn-glycerol)) to PG 18:0/18:1(9Z) (also known as 1-octadecanoyl-2-(9Z-octadecenoyl)-sn-glycero-3-phospho-(1'-sn-glycerol)), a step needed in the bis(monoacylglycerol)phosphate biosynthetic pathway. May have acyltransferase activity although the mechanism for PG remodeling has not been determined (By similarity).</text>
</comment>
<comment type="subcellular location">
    <subcellularLocation>
        <location evidence="6">Mitochondrion membrane</location>
        <topology evidence="8">Single-pass membrane protein</topology>
    </subcellularLocation>
    <subcellularLocation>
        <location evidence="1">Endoplasmic reticulum</location>
    </subcellularLocation>
    <subcellularLocation>
        <location evidence="6">Mitochondrion</location>
    </subcellularLocation>
    <text evidence="1">Localizes at the endoplasmic reticulum and at the endoplasmic reticulum-mitochondria interface.</text>
</comment>
<comment type="alternative products">
    <event type="alternative splicing"/>
    <isoform>
        <id>Q3U213-1</id>
        <name>1</name>
        <sequence type="displayed"/>
    </isoform>
    <isoform>
        <id>Q3U213-2</id>
        <name>2</name>
        <sequence type="described" ref="VSP_022864"/>
    </isoform>
    <isoform>
        <id>Q3U213-3</id>
        <name>3</name>
        <sequence type="described" ref="VSP_022865 VSP_022866"/>
    </isoform>
</comment>
<comment type="tissue specificity">
    <text evidence="4 6">Testis (PubMed:15722415). Higher expression at both mRNA and protein levels in brain and skeletal muscles, than in other organs (PubMed:35235340).</text>
</comment>
<comment type="similarity">
    <text evidence="8">Belongs to the SERAC1 family.</text>
</comment>
<reference key="1">
    <citation type="journal article" date="2005" name="Science">
        <title>The transcriptional landscape of the mammalian genome.</title>
        <authorList>
            <person name="Carninci P."/>
            <person name="Kasukawa T."/>
            <person name="Katayama S."/>
            <person name="Gough J."/>
            <person name="Frith M.C."/>
            <person name="Maeda N."/>
            <person name="Oyama R."/>
            <person name="Ravasi T."/>
            <person name="Lenhard B."/>
            <person name="Wells C."/>
            <person name="Kodzius R."/>
            <person name="Shimokawa K."/>
            <person name="Bajic V.B."/>
            <person name="Brenner S.E."/>
            <person name="Batalov S."/>
            <person name="Forrest A.R."/>
            <person name="Zavolan M."/>
            <person name="Davis M.J."/>
            <person name="Wilming L.G."/>
            <person name="Aidinis V."/>
            <person name="Allen J.E."/>
            <person name="Ambesi-Impiombato A."/>
            <person name="Apweiler R."/>
            <person name="Aturaliya R.N."/>
            <person name="Bailey T.L."/>
            <person name="Bansal M."/>
            <person name="Baxter L."/>
            <person name="Beisel K.W."/>
            <person name="Bersano T."/>
            <person name="Bono H."/>
            <person name="Chalk A.M."/>
            <person name="Chiu K.P."/>
            <person name="Choudhary V."/>
            <person name="Christoffels A."/>
            <person name="Clutterbuck D.R."/>
            <person name="Crowe M.L."/>
            <person name="Dalla E."/>
            <person name="Dalrymple B.P."/>
            <person name="de Bono B."/>
            <person name="Della Gatta G."/>
            <person name="di Bernardo D."/>
            <person name="Down T."/>
            <person name="Engstrom P."/>
            <person name="Fagiolini M."/>
            <person name="Faulkner G."/>
            <person name="Fletcher C.F."/>
            <person name="Fukushima T."/>
            <person name="Furuno M."/>
            <person name="Futaki S."/>
            <person name="Gariboldi M."/>
            <person name="Georgii-Hemming P."/>
            <person name="Gingeras T.R."/>
            <person name="Gojobori T."/>
            <person name="Green R.E."/>
            <person name="Gustincich S."/>
            <person name="Harbers M."/>
            <person name="Hayashi Y."/>
            <person name="Hensch T.K."/>
            <person name="Hirokawa N."/>
            <person name="Hill D."/>
            <person name="Huminiecki L."/>
            <person name="Iacono M."/>
            <person name="Ikeo K."/>
            <person name="Iwama A."/>
            <person name="Ishikawa T."/>
            <person name="Jakt M."/>
            <person name="Kanapin A."/>
            <person name="Katoh M."/>
            <person name="Kawasawa Y."/>
            <person name="Kelso J."/>
            <person name="Kitamura H."/>
            <person name="Kitano H."/>
            <person name="Kollias G."/>
            <person name="Krishnan S.P."/>
            <person name="Kruger A."/>
            <person name="Kummerfeld S.K."/>
            <person name="Kurochkin I.V."/>
            <person name="Lareau L.F."/>
            <person name="Lazarevic D."/>
            <person name="Lipovich L."/>
            <person name="Liu J."/>
            <person name="Liuni S."/>
            <person name="McWilliam S."/>
            <person name="Madan Babu M."/>
            <person name="Madera M."/>
            <person name="Marchionni L."/>
            <person name="Matsuda H."/>
            <person name="Matsuzawa S."/>
            <person name="Miki H."/>
            <person name="Mignone F."/>
            <person name="Miyake S."/>
            <person name="Morris K."/>
            <person name="Mottagui-Tabar S."/>
            <person name="Mulder N."/>
            <person name="Nakano N."/>
            <person name="Nakauchi H."/>
            <person name="Ng P."/>
            <person name="Nilsson R."/>
            <person name="Nishiguchi S."/>
            <person name="Nishikawa S."/>
            <person name="Nori F."/>
            <person name="Ohara O."/>
            <person name="Okazaki Y."/>
            <person name="Orlando V."/>
            <person name="Pang K.C."/>
            <person name="Pavan W.J."/>
            <person name="Pavesi G."/>
            <person name="Pesole G."/>
            <person name="Petrovsky N."/>
            <person name="Piazza S."/>
            <person name="Reed J."/>
            <person name="Reid J.F."/>
            <person name="Ring B.Z."/>
            <person name="Ringwald M."/>
            <person name="Rost B."/>
            <person name="Ruan Y."/>
            <person name="Salzberg S.L."/>
            <person name="Sandelin A."/>
            <person name="Schneider C."/>
            <person name="Schoenbach C."/>
            <person name="Sekiguchi K."/>
            <person name="Semple C.A."/>
            <person name="Seno S."/>
            <person name="Sessa L."/>
            <person name="Sheng Y."/>
            <person name="Shibata Y."/>
            <person name="Shimada H."/>
            <person name="Shimada K."/>
            <person name="Silva D."/>
            <person name="Sinclair B."/>
            <person name="Sperling S."/>
            <person name="Stupka E."/>
            <person name="Sugiura K."/>
            <person name="Sultana R."/>
            <person name="Takenaka Y."/>
            <person name="Taki K."/>
            <person name="Tammoja K."/>
            <person name="Tan S.L."/>
            <person name="Tang S."/>
            <person name="Taylor M.S."/>
            <person name="Tegner J."/>
            <person name="Teichmann S.A."/>
            <person name="Ueda H.R."/>
            <person name="van Nimwegen E."/>
            <person name="Verardo R."/>
            <person name="Wei C.L."/>
            <person name="Yagi K."/>
            <person name="Yamanishi H."/>
            <person name="Zabarovsky E."/>
            <person name="Zhu S."/>
            <person name="Zimmer A."/>
            <person name="Hide W."/>
            <person name="Bult C."/>
            <person name="Grimmond S.M."/>
            <person name="Teasdale R.D."/>
            <person name="Liu E.T."/>
            <person name="Brusic V."/>
            <person name="Quackenbush J."/>
            <person name="Wahlestedt C."/>
            <person name="Mattick J.S."/>
            <person name="Hume D.A."/>
            <person name="Kai C."/>
            <person name="Sasaki D."/>
            <person name="Tomaru Y."/>
            <person name="Fukuda S."/>
            <person name="Kanamori-Katayama M."/>
            <person name="Suzuki M."/>
            <person name="Aoki J."/>
            <person name="Arakawa T."/>
            <person name="Iida J."/>
            <person name="Imamura K."/>
            <person name="Itoh M."/>
            <person name="Kato T."/>
            <person name="Kawaji H."/>
            <person name="Kawagashira N."/>
            <person name="Kawashima T."/>
            <person name="Kojima M."/>
            <person name="Kondo S."/>
            <person name="Konno H."/>
            <person name="Nakano K."/>
            <person name="Ninomiya N."/>
            <person name="Nishio T."/>
            <person name="Okada M."/>
            <person name="Plessy C."/>
            <person name="Shibata K."/>
            <person name="Shiraki T."/>
            <person name="Suzuki S."/>
            <person name="Tagami M."/>
            <person name="Waki K."/>
            <person name="Watahiki A."/>
            <person name="Okamura-Oho Y."/>
            <person name="Suzuki H."/>
            <person name="Kawai J."/>
            <person name="Hayashizaki Y."/>
        </authorList>
    </citation>
    <scope>NUCLEOTIDE SEQUENCE [LARGE SCALE MRNA] (ISOFORMS 1; 2 AND 3)</scope>
    <scope>VARIANTS VAL-4; PHE-6; PHE-7 AND THR-64</scope>
    <source>
        <strain>C57BL/6J</strain>
        <strain>NOD</strain>
        <tissue>Testis</tissue>
    </source>
</reference>
<reference key="2">
    <citation type="journal article" date="2004" name="Genome Res.">
        <title>The status, quality, and expansion of the NIH full-length cDNA project: the Mammalian Gene Collection (MGC).</title>
        <authorList>
            <consortium name="The MGC Project Team"/>
        </authorList>
    </citation>
    <scope>NUCLEOTIDE SEQUENCE [LARGE SCALE MRNA] (ISOFORM 1)</scope>
</reference>
<reference key="3">
    <citation type="journal article" date="2005" name="Proc. Natl. Acad. Sci. U.S.A.">
        <title>Mutations in Serac1 or Synj2 cause proximal t haplotype-mediated male mouse sterility but not transmission ratio distortion.</title>
        <authorList>
            <person name="Schimenti J.C."/>
            <person name="Reynolds J.L."/>
            <person name="Planchart A."/>
        </authorList>
    </citation>
    <scope>TISSUE SPECIFICITY</scope>
    <scope>VARIANTS VAL-4; PHE-6; PHE-7; MET-25; THR-64 AND SER-518</scope>
</reference>
<reference key="4">
    <citation type="journal article" date="2022" name="Sci. Transl. Med.">
        <title>SERAC1 is a component of the mitochondrial serine transporter complex required for the maintenance of mitochondrial DNA.</title>
        <authorList>
            <person name="Fang H."/>
            <person name="Xie A."/>
            <person name="Du M."/>
            <person name="Li X."/>
            <person name="Yang K."/>
            <person name="Fu Y."/>
            <person name="Yuan X."/>
            <person name="Fan R."/>
            <person name="Yu W."/>
            <person name="Zhou Z."/>
            <person name="Sang T."/>
            <person name="Nie K."/>
            <person name="Li J."/>
            <person name="Zhao Q."/>
            <person name="Chen Z."/>
            <person name="Yang Y."/>
            <person name="Hong C."/>
            <person name="Lyu J."/>
        </authorList>
    </citation>
    <scope>FUNCTION</scope>
    <scope>SUBCELLULAR LOCATION</scope>
    <scope>TISSUE SPECIFICITY</scope>
</reference>